<feature type="chain" id="PRO_1000021135" description="4-hydroxy-3-methylbut-2-enyl diphosphate reductase">
    <location>
        <begin position="1"/>
        <end position="316"/>
    </location>
</feature>
<feature type="active site" description="Proton donor" evidence="1">
    <location>
        <position position="126"/>
    </location>
</feature>
<feature type="binding site" evidence="1">
    <location>
        <position position="12"/>
    </location>
    <ligand>
        <name>[4Fe-4S] cluster</name>
        <dbReference type="ChEBI" id="CHEBI:49883"/>
    </ligand>
</feature>
<feature type="binding site" evidence="1">
    <location>
        <position position="41"/>
    </location>
    <ligand>
        <name>(2E)-4-hydroxy-3-methylbut-2-enyl diphosphate</name>
        <dbReference type="ChEBI" id="CHEBI:128753"/>
    </ligand>
</feature>
<feature type="binding site" evidence="1">
    <location>
        <position position="41"/>
    </location>
    <ligand>
        <name>dimethylallyl diphosphate</name>
        <dbReference type="ChEBI" id="CHEBI:57623"/>
    </ligand>
</feature>
<feature type="binding site" evidence="1">
    <location>
        <position position="41"/>
    </location>
    <ligand>
        <name>isopentenyl diphosphate</name>
        <dbReference type="ChEBI" id="CHEBI:128769"/>
    </ligand>
</feature>
<feature type="binding site" evidence="1">
    <location>
        <position position="74"/>
    </location>
    <ligand>
        <name>(2E)-4-hydroxy-3-methylbut-2-enyl diphosphate</name>
        <dbReference type="ChEBI" id="CHEBI:128753"/>
    </ligand>
</feature>
<feature type="binding site" evidence="1">
    <location>
        <position position="74"/>
    </location>
    <ligand>
        <name>dimethylallyl diphosphate</name>
        <dbReference type="ChEBI" id="CHEBI:57623"/>
    </ligand>
</feature>
<feature type="binding site" evidence="1">
    <location>
        <position position="74"/>
    </location>
    <ligand>
        <name>isopentenyl diphosphate</name>
        <dbReference type="ChEBI" id="CHEBI:128769"/>
    </ligand>
</feature>
<feature type="binding site" evidence="1">
    <location>
        <position position="96"/>
    </location>
    <ligand>
        <name>[4Fe-4S] cluster</name>
        <dbReference type="ChEBI" id="CHEBI:49883"/>
    </ligand>
</feature>
<feature type="binding site" evidence="1">
    <location>
        <position position="124"/>
    </location>
    <ligand>
        <name>(2E)-4-hydroxy-3-methylbut-2-enyl diphosphate</name>
        <dbReference type="ChEBI" id="CHEBI:128753"/>
    </ligand>
</feature>
<feature type="binding site" evidence="1">
    <location>
        <position position="124"/>
    </location>
    <ligand>
        <name>dimethylallyl diphosphate</name>
        <dbReference type="ChEBI" id="CHEBI:57623"/>
    </ligand>
</feature>
<feature type="binding site" evidence="1">
    <location>
        <position position="124"/>
    </location>
    <ligand>
        <name>isopentenyl diphosphate</name>
        <dbReference type="ChEBI" id="CHEBI:128769"/>
    </ligand>
</feature>
<feature type="binding site" evidence="1">
    <location>
        <position position="168"/>
    </location>
    <ligand>
        <name>(2E)-4-hydroxy-3-methylbut-2-enyl diphosphate</name>
        <dbReference type="ChEBI" id="CHEBI:128753"/>
    </ligand>
</feature>
<feature type="binding site" evidence="1">
    <location>
        <position position="198"/>
    </location>
    <ligand>
        <name>[4Fe-4S] cluster</name>
        <dbReference type="ChEBI" id="CHEBI:49883"/>
    </ligand>
</feature>
<feature type="binding site" evidence="1">
    <location>
        <position position="226"/>
    </location>
    <ligand>
        <name>(2E)-4-hydroxy-3-methylbut-2-enyl diphosphate</name>
        <dbReference type="ChEBI" id="CHEBI:128753"/>
    </ligand>
</feature>
<feature type="binding site" evidence="1">
    <location>
        <position position="226"/>
    </location>
    <ligand>
        <name>dimethylallyl diphosphate</name>
        <dbReference type="ChEBI" id="CHEBI:57623"/>
    </ligand>
</feature>
<feature type="binding site" evidence="1">
    <location>
        <position position="226"/>
    </location>
    <ligand>
        <name>isopentenyl diphosphate</name>
        <dbReference type="ChEBI" id="CHEBI:128769"/>
    </ligand>
</feature>
<feature type="binding site" evidence="1">
    <location>
        <position position="227"/>
    </location>
    <ligand>
        <name>(2E)-4-hydroxy-3-methylbut-2-enyl diphosphate</name>
        <dbReference type="ChEBI" id="CHEBI:128753"/>
    </ligand>
</feature>
<feature type="binding site" evidence="1">
    <location>
        <position position="227"/>
    </location>
    <ligand>
        <name>dimethylallyl diphosphate</name>
        <dbReference type="ChEBI" id="CHEBI:57623"/>
    </ligand>
</feature>
<feature type="binding site" evidence="1">
    <location>
        <position position="227"/>
    </location>
    <ligand>
        <name>isopentenyl diphosphate</name>
        <dbReference type="ChEBI" id="CHEBI:128769"/>
    </ligand>
</feature>
<feature type="binding site" evidence="1">
    <location>
        <position position="228"/>
    </location>
    <ligand>
        <name>(2E)-4-hydroxy-3-methylbut-2-enyl diphosphate</name>
        <dbReference type="ChEBI" id="CHEBI:128753"/>
    </ligand>
</feature>
<feature type="binding site" evidence="1">
    <location>
        <position position="228"/>
    </location>
    <ligand>
        <name>dimethylallyl diphosphate</name>
        <dbReference type="ChEBI" id="CHEBI:57623"/>
    </ligand>
</feature>
<feature type="binding site" evidence="1">
    <location>
        <position position="228"/>
    </location>
    <ligand>
        <name>isopentenyl diphosphate</name>
        <dbReference type="ChEBI" id="CHEBI:128769"/>
    </ligand>
</feature>
<feature type="binding site" evidence="1">
    <location>
        <position position="270"/>
    </location>
    <ligand>
        <name>(2E)-4-hydroxy-3-methylbut-2-enyl diphosphate</name>
        <dbReference type="ChEBI" id="CHEBI:128753"/>
    </ligand>
</feature>
<feature type="binding site" evidence="1">
    <location>
        <position position="270"/>
    </location>
    <ligand>
        <name>dimethylallyl diphosphate</name>
        <dbReference type="ChEBI" id="CHEBI:57623"/>
    </ligand>
</feature>
<feature type="binding site" evidence="1">
    <location>
        <position position="270"/>
    </location>
    <ligand>
        <name>isopentenyl diphosphate</name>
        <dbReference type="ChEBI" id="CHEBI:128769"/>
    </ligand>
</feature>
<organism>
    <name type="scientific">Marinobacter nauticus (strain ATCC 700491 / DSM 11845 / VT8)</name>
    <name type="common">Marinobacter aquaeolei</name>
    <dbReference type="NCBI Taxonomy" id="351348"/>
    <lineage>
        <taxon>Bacteria</taxon>
        <taxon>Pseudomonadati</taxon>
        <taxon>Pseudomonadota</taxon>
        <taxon>Gammaproteobacteria</taxon>
        <taxon>Pseudomonadales</taxon>
        <taxon>Marinobacteraceae</taxon>
        <taxon>Marinobacter</taxon>
    </lineage>
</organism>
<name>ISPH_MARN8</name>
<gene>
    <name evidence="1" type="primary">ispH</name>
    <name type="ordered locus">Maqu_0865</name>
</gene>
<accession>A1TYZ2</accession>
<sequence length="316" mass="34776">MQIRLANPRGFCAGVDRAIEIVNRALDVFGAPIYVRHEVVHNKFVVDNLRNRGAIFVDELGEVPDDKLVIFSAHGVSQAVQNEAARRGLKVFDATCPLVTKVHMEVMRYSRDGRECILIGHHGHPEVEGTMGQYDHSNGGDIYLVEDEADVQKLEVKDPSRLSFVTQTTLSMDDTARVIDALRAKFPQIEGPRKDDICYATQNRQDAVKQLAGDCDIMLVVGSPNSSNSNRLRELAERMGTPAYLIDEAAQIDPAWLYGKKAIGVTAGASAPEVLVADVIKRLKALGGEEPVEVSGREESIVFSMPKELRIDAVEL</sequence>
<reference key="1">
    <citation type="journal article" date="2011" name="Appl. Environ. Microbiol.">
        <title>Genomic potential of Marinobacter aquaeolei, a biogeochemical 'opportunitroph'.</title>
        <authorList>
            <person name="Singer E."/>
            <person name="Webb E.A."/>
            <person name="Nelson W.C."/>
            <person name="Heidelberg J.F."/>
            <person name="Ivanova N."/>
            <person name="Pati A."/>
            <person name="Edwards K.J."/>
        </authorList>
    </citation>
    <scope>NUCLEOTIDE SEQUENCE [LARGE SCALE GENOMIC DNA]</scope>
    <source>
        <strain>ATCC 700491 / DSM 11845 / VT8</strain>
    </source>
</reference>
<keyword id="KW-0004">4Fe-4S</keyword>
<keyword id="KW-0408">Iron</keyword>
<keyword id="KW-0411">Iron-sulfur</keyword>
<keyword id="KW-0414">Isoprene biosynthesis</keyword>
<keyword id="KW-0479">Metal-binding</keyword>
<keyword id="KW-0560">Oxidoreductase</keyword>
<protein>
    <recommendedName>
        <fullName evidence="1">4-hydroxy-3-methylbut-2-enyl diphosphate reductase</fullName>
        <shortName evidence="1">HMBPP reductase</shortName>
        <ecNumber evidence="1">1.17.7.4</ecNumber>
    </recommendedName>
</protein>
<proteinExistence type="inferred from homology"/>
<dbReference type="EC" id="1.17.7.4" evidence="1"/>
<dbReference type="EMBL" id="CP000514">
    <property type="protein sequence ID" value="ABM17961.1"/>
    <property type="molecule type" value="Genomic_DNA"/>
</dbReference>
<dbReference type="RefSeq" id="WP_011784383.1">
    <property type="nucleotide sequence ID" value="NC_008740.1"/>
</dbReference>
<dbReference type="SMR" id="A1TYZ2"/>
<dbReference type="STRING" id="351348.Maqu_0865"/>
<dbReference type="KEGG" id="maq:Maqu_0865"/>
<dbReference type="eggNOG" id="COG0761">
    <property type="taxonomic scope" value="Bacteria"/>
</dbReference>
<dbReference type="HOGENOM" id="CLU_027486_1_1_6"/>
<dbReference type="OrthoDB" id="9804068at2"/>
<dbReference type="UniPathway" id="UPA00056">
    <property type="reaction ID" value="UER00097"/>
</dbReference>
<dbReference type="UniPathway" id="UPA00059">
    <property type="reaction ID" value="UER00105"/>
</dbReference>
<dbReference type="Proteomes" id="UP000000998">
    <property type="component" value="Chromosome"/>
</dbReference>
<dbReference type="GO" id="GO:0051539">
    <property type="term" value="F:4 iron, 4 sulfur cluster binding"/>
    <property type="evidence" value="ECO:0007669"/>
    <property type="project" value="UniProtKB-UniRule"/>
</dbReference>
<dbReference type="GO" id="GO:0051745">
    <property type="term" value="F:4-hydroxy-3-methylbut-2-enyl diphosphate reductase activity"/>
    <property type="evidence" value="ECO:0007669"/>
    <property type="project" value="UniProtKB-UniRule"/>
</dbReference>
<dbReference type="GO" id="GO:0046872">
    <property type="term" value="F:metal ion binding"/>
    <property type="evidence" value="ECO:0007669"/>
    <property type="project" value="UniProtKB-KW"/>
</dbReference>
<dbReference type="GO" id="GO:0050992">
    <property type="term" value="P:dimethylallyl diphosphate biosynthetic process"/>
    <property type="evidence" value="ECO:0007669"/>
    <property type="project" value="UniProtKB-UniRule"/>
</dbReference>
<dbReference type="GO" id="GO:0019288">
    <property type="term" value="P:isopentenyl diphosphate biosynthetic process, methylerythritol 4-phosphate pathway"/>
    <property type="evidence" value="ECO:0007669"/>
    <property type="project" value="UniProtKB-UniRule"/>
</dbReference>
<dbReference type="GO" id="GO:0016114">
    <property type="term" value="P:terpenoid biosynthetic process"/>
    <property type="evidence" value="ECO:0007669"/>
    <property type="project" value="UniProtKB-UniRule"/>
</dbReference>
<dbReference type="CDD" id="cd13944">
    <property type="entry name" value="lytB_ispH"/>
    <property type="match status" value="1"/>
</dbReference>
<dbReference type="Gene3D" id="3.40.50.11270">
    <property type="match status" value="1"/>
</dbReference>
<dbReference type="Gene3D" id="3.40.1010.20">
    <property type="entry name" value="4-hydroxy-3-methylbut-2-enyl diphosphate reductase, catalytic domain"/>
    <property type="match status" value="2"/>
</dbReference>
<dbReference type="HAMAP" id="MF_00191">
    <property type="entry name" value="IspH"/>
    <property type="match status" value="1"/>
</dbReference>
<dbReference type="InterPro" id="IPR003451">
    <property type="entry name" value="LytB/IspH"/>
</dbReference>
<dbReference type="NCBIfam" id="TIGR00216">
    <property type="entry name" value="ispH_lytB"/>
    <property type="match status" value="1"/>
</dbReference>
<dbReference type="NCBIfam" id="NF002188">
    <property type="entry name" value="PRK01045.1-2"/>
    <property type="match status" value="1"/>
</dbReference>
<dbReference type="NCBIfam" id="NF002190">
    <property type="entry name" value="PRK01045.1-4"/>
    <property type="match status" value="1"/>
</dbReference>
<dbReference type="PANTHER" id="PTHR30426">
    <property type="entry name" value="4-HYDROXY-3-METHYLBUT-2-ENYL DIPHOSPHATE REDUCTASE"/>
    <property type="match status" value="1"/>
</dbReference>
<dbReference type="PANTHER" id="PTHR30426:SF0">
    <property type="entry name" value="4-HYDROXY-3-METHYLBUT-2-ENYL DIPHOSPHATE REDUCTASE"/>
    <property type="match status" value="1"/>
</dbReference>
<dbReference type="Pfam" id="PF02401">
    <property type="entry name" value="LYTB"/>
    <property type="match status" value="1"/>
</dbReference>
<comment type="function">
    <text evidence="1">Catalyzes the conversion of 1-hydroxy-2-methyl-2-(E)-butenyl 4-diphosphate (HMBPP) into a mixture of isopentenyl diphosphate (IPP) and dimethylallyl diphosphate (DMAPP). Acts in the terminal step of the DOXP/MEP pathway for isoprenoid precursor biosynthesis.</text>
</comment>
<comment type="catalytic activity">
    <reaction evidence="1">
        <text>isopentenyl diphosphate + 2 oxidized [2Fe-2S]-[ferredoxin] + H2O = (2E)-4-hydroxy-3-methylbut-2-enyl diphosphate + 2 reduced [2Fe-2S]-[ferredoxin] + 2 H(+)</text>
        <dbReference type="Rhea" id="RHEA:24488"/>
        <dbReference type="Rhea" id="RHEA-COMP:10000"/>
        <dbReference type="Rhea" id="RHEA-COMP:10001"/>
        <dbReference type="ChEBI" id="CHEBI:15377"/>
        <dbReference type="ChEBI" id="CHEBI:15378"/>
        <dbReference type="ChEBI" id="CHEBI:33737"/>
        <dbReference type="ChEBI" id="CHEBI:33738"/>
        <dbReference type="ChEBI" id="CHEBI:128753"/>
        <dbReference type="ChEBI" id="CHEBI:128769"/>
        <dbReference type="EC" id="1.17.7.4"/>
    </reaction>
</comment>
<comment type="catalytic activity">
    <reaction evidence="1">
        <text>dimethylallyl diphosphate + 2 oxidized [2Fe-2S]-[ferredoxin] + H2O = (2E)-4-hydroxy-3-methylbut-2-enyl diphosphate + 2 reduced [2Fe-2S]-[ferredoxin] + 2 H(+)</text>
        <dbReference type="Rhea" id="RHEA:24825"/>
        <dbReference type="Rhea" id="RHEA-COMP:10000"/>
        <dbReference type="Rhea" id="RHEA-COMP:10001"/>
        <dbReference type="ChEBI" id="CHEBI:15377"/>
        <dbReference type="ChEBI" id="CHEBI:15378"/>
        <dbReference type="ChEBI" id="CHEBI:33737"/>
        <dbReference type="ChEBI" id="CHEBI:33738"/>
        <dbReference type="ChEBI" id="CHEBI:57623"/>
        <dbReference type="ChEBI" id="CHEBI:128753"/>
        <dbReference type="EC" id="1.17.7.4"/>
    </reaction>
</comment>
<comment type="cofactor">
    <cofactor evidence="1">
        <name>[4Fe-4S] cluster</name>
        <dbReference type="ChEBI" id="CHEBI:49883"/>
    </cofactor>
    <text evidence="1">Binds 1 [4Fe-4S] cluster per subunit.</text>
</comment>
<comment type="pathway">
    <text evidence="1">Isoprenoid biosynthesis; dimethylallyl diphosphate biosynthesis; dimethylallyl diphosphate from (2E)-4-hydroxy-3-methylbutenyl diphosphate: step 1/1.</text>
</comment>
<comment type="pathway">
    <text evidence="1">Isoprenoid biosynthesis; isopentenyl diphosphate biosynthesis via DXP pathway; isopentenyl diphosphate from 1-deoxy-D-xylulose 5-phosphate: step 6/6.</text>
</comment>
<comment type="similarity">
    <text evidence="1">Belongs to the IspH family.</text>
</comment>
<evidence type="ECO:0000255" key="1">
    <source>
        <dbReference type="HAMAP-Rule" id="MF_00191"/>
    </source>
</evidence>